<feature type="chain" id="PRO_1000002979" description="Phospho-N-acetylmuramoyl-pentapeptide-transferase">
    <location>
        <begin position="1"/>
        <end position="365"/>
    </location>
</feature>
<feature type="transmembrane region" description="Helical" evidence="1">
    <location>
        <begin position="22"/>
        <end position="42"/>
    </location>
</feature>
<feature type="transmembrane region" description="Helical" evidence="1">
    <location>
        <begin position="74"/>
        <end position="94"/>
    </location>
</feature>
<feature type="transmembrane region" description="Helical" evidence="1">
    <location>
        <begin position="95"/>
        <end position="115"/>
    </location>
</feature>
<feature type="transmembrane region" description="Helical" evidence="1">
    <location>
        <begin position="134"/>
        <end position="154"/>
    </location>
</feature>
<feature type="transmembrane region" description="Helical" evidence="1">
    <location>
        <begin position="168"/>
        <end position="188"/>
    </location>
</feature>
<feature type="transmembrane region" description="Helical" evidence="1">
    <location>
        <begin position="201"/>
        <end position="221"/>
    </location>
</feature>
<feature type="transmembrane region" description="Helical" evidence="1">
    <location>
        <begin position="240"/>
        <end position="260"/>
    </location>
</feature>
<feature type="transmembrane region" description="Helical" evidence="1">
    <location>
        <begin position="267"/>
        <end position="287"/>
    </location>
</feature>
<feature type="transmembrane region" description="Helical" evidence="1">
    <location>
        <begin position="292"/>
        <end position="312"/>
    </location>
</feature>
<feature type="transmembrane region" description="Helical" evidence="1">
    <location>
        <begin position="342"/>
        <end position="362"/>
    </location>
</feature>
<evidence type="ECO:0000255" key="1">
    <source>
        <dbReference type="HAMAP-Rule" id="MF_00038"/>
    </source>
</evidence>
<accession>A0Q5C1</accession>
<keyword id="KW-0131">Cell cycle</keyword>
<keyword id="KW-0132">Cell division</keyword>
<keyword id="KW-0997">Cell inner membrane</keyword>
<keyword id="KW-1003">Cell membrane</keyword>
<keyword id="KW-0133">Cell shape</keyword>
<keyword id="KW-0961">Cell wall biogenesis/degradation</keyword>
<keyword id="KW-0460">Magnesium</keyword>
<keyword id="KW-0472">Membrane</keyword>
<keyword id="KW-0479">Metal-binding</keyword>
<keyword id="KW-0573">Peptidoglycan synthesis</keyword>
<keyword id="KW-0808">Transferase</keyword>
<keyword id="KW-0812">Transmembrane</keyword>
<keyword id="KW-1133">Transmembrane helix</keyword>
<proteinExistence type="inferred from homology"/>
<reference key="1">
    <citation type="journal article" date="2007" name="Genome Biol.">
        <title>Comparison of Francisella tularensis genomes reveals evolutionary events associated with the emergence of human pathogenic strains.</title>
        <authorList>
            <person name="Rohmer L."/>
            <person name="Fong C."/>
            <person name="Abmayr S."/>
            <person name="Wasnick M."/>
            <person name="Larson Freeman T.J."/>
            <person name="Radey M."/>
            <person name="Guina T."/>
            <person name="Svensson K."/>
            <person name="Hayden H.S."/>
            <person name="Jacobs M."/>
            <person name="Gallagher L.A."/>
            <person name="Manoil C."/>
            <person name="Ernst R.K."/>
            <person name="Drees B."/>
            <person name="Buckley D."/>
            <person name="Haugen E."/>
            <person name="Bovee D."/>
            <person name="Zhou Y."/>
            <person name="Chang J."/>
            <person name="Levy R."/>
            <person name="Lim R."/>
            <person name="Gillett W."/>
            <person name="Guenthener D."/>
            <person name="Kang A."/>
            <person name="Shaffer S.A."/>
            <person name="Taylor G."/>
            <person name="Chen J."/>
            <person name="Gallis B."/>
            <person name="D'Argenio D.A."/>
            <person name="Forsman M."/>
            <person name="Olson M.V."/>
            <person name="Goodlett D.R."/>
            <person name="Kaul R."/>
            <person name="Miller S.I."/>
            <person name="Brittnacher M.J."/>
        </authorList>
    </citation>
    <scope>NUCLEOTIDE SEQUENCE [LARGE SCALE GENOMIC DNA]</scope>
    <source>
        <strain>U112</strain>
    </source>
</reference>
<name>MRAY_FRATN</name>
<gene>
    <name evidence="1" type="primary">mraY</name>
    <name type="ordered locus">FTN_0541</name>
</gene>
<comment type="function">
    <text evidence="1">Catalyzes the initial step of the lipid cycle reactions in the biosynthesis of the cell wall peptidoglycan: transfers peptidoglycan precursor phospho-MurNAc-pentapeptide from UDP-MurNAc-pentapeptide onto the lipid carrier undecaprenyl phosphate, yielding undecaprenyl-pyrophosphoryl-MurNAc-pentapeptide, known as lipid I.</text>
</comment>
<comment type="catalytic activity">
    <reaction evidence="1">
        <text>UDP-N-acetyl-alpha-D-muramoyl-L-alanyl-gamma-D-glutamyl-meso-2,6-diaminopimeloyl-D-alanyl-D-alanine + di-trans,octa-cis-undecaprenyl phosphate = di-trans,octa-cis-undecaprenyl diphospho-N-acetyl-alpha-D-muramoyl-L-alanyl-D-glutamyl-meso-2,6-diaminopimeloyl-D-alanyl-D-alanine + UMP</text>
        <dbReference type="Rhea" id="RHEA:28386"/>
        <dbReference type="ChEBI" id="CHEBI:57865"/>
        <dbReference type="ChEBI" id="CHEBI:60392"/>
        <dbReference type="ChEBI" id="CHEBI:61386"/>
        <dbReference type="ChEBI" id="CHEBI:61387"/>
        <dbReference type="EC" id="2.7.8.13"/>
    </reaction>
</comment>
<comment type="cofactor">
    <cofactor evidence="1">
        <name>Mg(2+)</name>
        <dbReference type="ChEBI" id="CHEBI:18420"/>
    </cofactor>
</comment>
<comment type="pathway">
    <text evidence="1">Cell wall biogenesis; peptidoglycan biosynthesis.</text>
</comment>
<comment type="subcellular location">
    <subcellularLocation>
        <location evidence="1">Cell inner membrane</location>
        <topology evidence="1">Multi-pass membrane protein</topology>
    </subcellularLocation>
</comment>
<comment type="similarity">
    <text evidence="1">Belongs to the glycosyltransferase 4 family. MraY subfamily.</text>
</comment>
<organism>
    <name type="scientific">Francisella tularensis subsp. novicida (strain U112)</name>
    <dbReference type="NCBI Taxonomy" id="401614"/>
    <lineage>
        <taxon>Bacteria</taxon>
        <taxon>Pseudomonadati</taxon>
        <taxon>Pseudomonadota</taxon>
        <taxon>Gammaproteobacteria</taxon>
        <taxon>Thiotrichales</taxon>
        <taxon>Francisellaceae</taxon>
        <taxon>Francisella</taxon>
    </lineage>
</organism>
<dbReference type="EC" id="2.7.8.13" evidence="1"/>
<dbReference type="EMBL" id="CP000439">
    <property type="protein sequence ID" value="ABK89436.1"/>
    <property type="molecule type" value="Genomic_DNA"/>
</dbReference>
<dbReference type="RefSeq" id="WP_003038575.1">
    <property type="nucleotide sequence ID" value="NC_008601.1"/>
</dbReference>
<dbReference type="SMR" id="A0Q5C1"/>
<dbReference type="KEGG" id="ftn:FTN_0541"/>
<dbReference type="KEGG" id="ftx:AW25_1488"/>
<dbReference type="BioCyc" id="FTUL401614:G1G75-563-MONOMER"/>
<dbReference type="UniPathway" id="UPA00219"/>
<dbReference type="Proteomes" id="UP000000762">
    <property type="component" value="Chromosome"/>
</dbReference>
<dbReference type="GO" id="GO:0005886">
    <property type="term" value="C:plasma membrane"/>
    <property type="evidence" value="ECO:0007669"/>
    <property type="project" value="UniProtKB-SubCell"/>
</dbReference>
<dbReference type="GO" id="GO:0046872">
    <property type="term" value="F:metal ion binding"/>
    <property type="evidence" value="ECO:0007669"/>
    <property type="project" value="UniProtKB-KW"/>
</dbReference>
<dbReference type="GO" id="GO:0008963">
    <property type="term" value="F:phospho-N-acetylmuramoyl-pentapeptide-transferase activity"/>
    <property type="evidence" value="ECO:0007669"/>
    <property type="project" value="UniProtKB-UniRule"/>
</dbReference>
<dbReference type="GO" id="GO:0051992">
    <property type="term" value="F:UDP-N-acetylmuramoyl-L-alanyl-D-glutamyl-meso-2,6-diaminopimelyl-D-alanyl-D-alanine:undecaprenyl-phosphate transferase activity"/>
    <property type="evidence" value="ECO:0007669"/>
    <property type="project" value="RHEA"/>
</dbReference>
<dbReference type="GO" id="GO:0051301">
    <property type="term" value="P:cell division"/>
    <property type="evidence" value="ECO:0007669"/>
    <property type="project" value="UniProtKB-KW"/>
</dbReference>
<dbReference type="GO" id="GO:0071555">
    <property type="term" value="P:cell wall organization"/>
    <property type="evidence" value="ECO:0007669"/>
    <property type="project" value="UniProtKB-KW"/>
</dbReference>
<dbReference type="GO" id="GO:0009252">
    <property type="term" value="P:peptidoglycan biosynthetic process"/>
    <property type="evidence" value="ECO:0007669"/>
    <property type="project" value="UniProtKB-UniRule"/>
</dbReference>
<dbReference type="GO" id="GO:0008360">
    <property type="term" value="P:regulation of cell shape"/>
    <property type="evidence" value="ECO:0007669"/>
    <property type="project" value="UniProtKB-KW"/>
</dbReference>
<dbReference type="CDD" id="cd06852">
    <property type="entry name" value="GT_MraY"/>
    <property type="match status" value="1"/>
</dbReference>
<dbReference type="HAMAP" id="MF_00038">
    <property type="entry name" value="MraY"/>
    <property type="match status" value="1"/>
</dbReference>
<dbReference type="InterPro" id="IPR000715">
    <property type="entry name" value="Glycosyl_transferase_4"/>
</dbReference>
<dbReference type="InterPro" id="IPR003524">
    <property type="entry name" value="PNAcMuramoyl-5peptid_Trfase"/>
</dbReference>
<dbReference type="InterPro" id="IPR018480">
    <property type="entry name" value="PNAcMuramoyl-5peptid_Trfase_CS"/>
</dbReference>
<dbReference type="NCBIfam" id="TIGR00445">
    <property type="entry name" value="mraY"/>
    <property type="match status" value="1"/>
</dbReference>
<dbReference type="PANTHER" id="PTHR22926">
    <property type="entry name" value="PHOSPHO-N-ACETYLMURAMOYL-PENTAPEPTIDE-TRANSFERASE"/>
    <property type="match status" value="1"/>
</dbReference>
<dbReference type="PANTHER" id="PTHR22926:SF5">
    <property type="entry name" value="PHOSPHO-N-ACETYLMURAMOYL-PENTAPEPTIDE-TRANSFERASE HOMOLOG"/>
    <property type="match status" value="1"/>
</dbReference>
<dbReference type="Pfam" id="PF00953">
    <property type="entry name" value="Glycos_transf_4"/>
    <property type="match status" value="1"/>
</dbReference>
<dbReference type="Pfam" id="PF10555">
    <property type="entry name" value="MraY_sig1"/>
    <property type="match status" value="1"/>
</dbReference>
<dbReference type="PROSITE" id="PS01347">
    <property type="entry name" value="MRAY_1"/>
    <property type="match status" value="1"/>
</dbReference>
<dbReference type="PROSITE" id="PS01348">
    <property type="entry name" value="MRAY_2"/>
    <property type="match status" value="1"/>
</dbReference>
<protein>
    <recommendedName>
        <fullName evidence="1">Phospho-N-acetylmuramoyl-pentapeptide-transferase</fullName>
        <ecNumber evidence="1">2.7.8.13</ecNumber>
    </recommendedName>
    <alternativeName>
        <fullName evidence="1">UDP-MurNAc-pentapeptide phosphotransferase</fullName>
    </alternativeName>
</protein>
<sequence>MLIYLFEWLSHYFKGLEVFSSYISVRIIMISITSLLITLALGRPMISWLQRMQIGQIVRDDGPQSHFSKRNTPTMGGVLILSSVIISCLLWGDLTSIYLWILILVVIFFGAIGFFDDYLKLVLKHPKGLRAKHKFALQSIFSIVLAIVLFYLLSKNGQMSLSIPFSKSLYIPMGIVIFVVLAFFIINGSSNAVNLTDGLDGLAIVPVVLVAAGLGIYAYIETNSTLANYLLFNYLGNPGLAEVAVFCAAVCGSGLAFLWFNSHPAEVFMGDVGSLTLGAVLGVIAVMVRQELIFFIMGLLFVVEALSVMLQVGSYKLRNGKRIFRMAPIHHHFELKGWPETKVVIRFWIISLILFLIGLAAIKVR</sequence>